<name>C28A5_DROME</name>
<organism>
    <name type="scientific">Drosophila melanogaster</name>
    <name type="common">Fruit fly</name>
    <dbReference type="NCBI Taxonomy" id="7227"/>
    <lineage>
        <taxon>Eukaryota</taxon>
        <taxon>Metazoa</taxon>
        <taxon>Ecdysozoa</taxon>
        <taxon>Arthropoda</taxon>
        <taxon>Hexapoda</taxon>
        <taxon>Insecta</taxon>
        <taxon>Pterygota</taxon>
        <taxon>Neoptera</taxon>
        <taxon>Endopterygota</taxon>
        <taxon>Diptera</taxon>
        <taxon>Brachycera</taxon>
        <taxon>Muscomorpha</taxon>
        <taxon>Ephydroidea</taxon>
        <taxon>Drosophilidae</taxon>
        <taxon>Drosophila</taxon>
        <taxon>Sophophora</taxon>
    </lineage>
</organism>
<accession>Q9V419</accession>
<evidence type="ECO:0000250" key="1"/>
<evidence type="ECO:0000305" key="2"/>
<protein>
    <recommendedName>
        <fullName>Probable cytochrome P450 28a5</fullName>
        <ecNumber>1.14.-.-</ecNumber>
    </recommendedName>
    <alternativeName>
        <fullName>CYPXXVIIIA5</fullName>
    </alternativeName>
</protein>
<reference key="1">
    <citation type="journal article" date="1999" name="Genetics">
        <title>An exploration of the sequence of a 2.9-Mb region of the genome of Drosophila melanogaster: the Adh region.</title>
        <authorList>
            <person name="Ashburner M."/>
            <person name="Misra S."/>
            <person name="Roote J."/>
            <person name="Lewis S.E."/>
            <person name="Blazej R.G."/>
            <person name="Davis T."/>
            <person name="Doyle C."/>
            <person name="Galle R.F."/>
            <person name="George R.A."/>
            <person name="Harris N.L."/>
            <person name="Hartzell G."/>
            <person name="Harvey D.A."/>
            <person name="Hong L."/>
            <person name="Houston K.A."/>
            <person name="Hoskins R.A."/>
            <person name="Johnson G."/>
            <person name="Martin C."/>
            <person name="Moshrefi A.R."/>
            <person name="Palazzolo M."/>
            <person name="Reese M.G."/>
            <person name="Spradling A.C."/>
            <person name="Tsang G."/>
            <person name="Wan K.H."/>
            <person name="Whitelaw K."/>
            <person name="Celniker S.E."/>
            <person name="Rubin G.M."/>
        </authorList>
    </citation>
    <scope>NUCLEOTIDE SEQUENCE [LARGE SCALE GENOMIC DNA]</scope>
    <source>
        <strain>Berkeley</strain>
    </source>
</reference>
<reference key="2">
    <citation type="journal article" date="2000" name="Science">
        <title>The genome sequence of Drosophila melanogaster.</title>
        <authorList>
            <person name="Adams M.D."/>
            <person name="Celniker S.E."/>
            <person name="Holt R.A."/>
            <person name="Evans C.A."/>
            <person name="Gocayne J.D."/>
            <person name="Amanatides P.G."/>
            <person name="Scherer S.E."/>
            <person name="Li P.W."/>
            <person name="Hoskins R.A."/>
            <person name="Galle R.F."/>
            <person name="George R.A."/>
            <person name="Lewis S.E."/>
            <person name="Richards S."/>
            <person name="Ashburner M."/>
            <person name="Henderson S.N."/>
            <person name="Sutton G.G."/>
            <person name="Wortman J.R."/>
            <person name="Yandell M.D."/>
            <person name="Zhang Q."/>
            <person name="Chen L.X."/>
            <person name="Brandon R.C."/>
            <person name="Rogers Y.-H.C."/>
            <person name="Blazej R.G."/>
            <person name="Champe M."/>
            <person name="Pfeiffer B.D."/>
            <person name="Wan K.H."/>
            <person name="Doyle C."/>
            <person name="Baxter E.G."/>
            <person name="Helt G."/>
            <person name="Nelson C.R."/>
            <person name="Miklos G.L.G."/>
            <person name="Abril J.F."/>
            <person name="Agbayani A."/>
            <person name="An H.-J."/>
            <person name="Andrews-Pfannkoch C."/>
            <person name="Baldwin D."/>
            <person name="Ballew R.M."/>
            <person name="Basu A."/>
            <person name="Baxendale J."/>
            <person name="Bayraktaroglu L."/>
            <person name="Beasley E.M."/>
            <person name="Beeson K.Y."/>
            <person name="Benos P.V."/>
            <person name="Berman B.P."/>
            <person name="Bhandari D."/>
            <person name="Bolshakov S."/>
            <person name="Borkova D."/>
            <person name="Botchan M.R."/>
            <person name="Bouck J."/>
            <person name="Brokstein P."/>
            <person name="Brottier P."/>
            <person name="Burtis K.C."/>
            <person name="Busam D.A."/>
            <person name="Butler H."/>
            <person name="Cadieu E."/>
            <person name="Center A."/>
            <person name="Chandra I."/>
            <person name="Cherry J.M."/>
            <person name="Cawley S."/>
            <person name="Dahlke C."/>
            <person name="Davenport L.B."/>
            <person name="Davies P."/>
            <person name="de Pablos B."/>
            <person name="Delcher A."/>
            <person name="Deng Z."/>
            <person name="Mays A.D."/>
            <person name="Dew I."/>
            <person name="Dietz S.M."/>
            <person name="Dodson K."/>
            <person name="Doup L.E."/>
            <person name="Downes M."/>
            <person name="Dugan-Rocha S."/>
            <person name="Dunkov B.C."/>
            <person name="Dunn P."/>
            <person name="Durbin K.J."/>
            <person name="Evangelista C.C."/>
            <person name="Ferraz C."/>
            <person name="Ferriera S."/>
            <person name="Fleischmann W."/>
            <person name="Fosler C."/>
            <person name="Gabrielian A.E."/>
            <person name="Garg N.S."/>
            <person name="Gelbart W.M."/>
            <person name="Glasser K."/>
            <person name="Glodek A."/>
            <person name="Gong F."/>
            <person name="Gorrell J.H."/>
            <person name="Gu Z."/>
            <person name="Guan P."/>
            <person name="Harris M."/>
            <person name="Harris N.L."/>
            <person name="Harvey D.A."/>
            <person name="Heiman T.J."/>
            <person name="Hernandez J.R."/>
            <person name="Houck J."/>
            <person name="Hostin D."/>
            <person name="Houston K.A."/>
            <person name="Howland T.J."/>
            <person name="Wei M.-H."/>
            <person name="Ibegwam C."/>
            <person name="Jalali M."/>
            <person name="Kalush F."/>
            <person name="Karpen G.H."/>
            <person name="Ke Z."/>
            <person name="Kennison J.A."/>
            <person name="Ketchum K.A."/>
            <person name="Kimmel B.E."/>
            <person name="Kodira C.D."/>
            <person name="Kraft C.L."/>
            <person name="Kravitz S."/>
            <person name="Kulp D."/>
            <person name="Lai Z."/>
            <person name="Lasko P."/>
            <person name="Lei Y."/>
            <person name="Levitsky A.A."/>
            <person name="Li J.H."/>
            <person name="Li Z."/>
            <person name="Liang Y."/>
            <person name="Lin X."/>
            <person name="Liu X."/>
            <person name="Mattei B."/>
            <person name="McIntosh T.C."/>
            <person name="McLeod M.P."/>
            <person name="McPherson D."/>
            <person name="Merkulov G."/>
            <person name="Milshina N.V."/>
            <person name="Mobarry C."/>
            <person name="Morris J."/>
            <person name="Moshrefi A."/>
            <person name="Mount S.M."/>
            <person name="Moy M."/>
            <person name="Murphy B."/>
            <person name="Murphy L."/>
            <person name="Muzny D.M."/>
            <person name="Nelson D.L."/>
            <person name="Nelson D.R."/>
            <person name="Nelson K.A."/>
            <person name="Nixon K."/>
            <person name="Nusskern D.R."/>
            <person name="Pacleb J.M."/>
            <person name="Palazzolo M."/>
            <person name="Pittman G.S."/>
            <person name="Pan S."/>
            <person name="Pollard J."/>
            <person name="Puri V."/>
            <person name="Reese M.G."/>
            <person name="Reinert K."/>
            <person name="Remington K."/>
            <person name="Saunders R.D.C."/>
            <person name="Scheeler F."/>
            <person name="Shen H."/>
            <person name="Shue B.C."/>
            <person name="Siden-Kiamos I."/>
            <person name="Simpson M."/>
            <person name="Skupski M.P."/>
            <person name="Smith T.J."/>
            <person name="Spier E."/>
            <person name="Spradling A.C."/>
            <person name="Stapleton M."/>
            <person name="Strong R."/>
            <person name="Sun E."/>
            <person name="Svirskas R."/>
            <person name="Tector C."/>
            <person name="Turner R."/>
            <person name="Venter E."/>
            <person name="Wang A.H."/>
            <person name="Wang X."/>
            <person name="Wang Z.-Y."/>
            <person name="Wassarman D.A."/>
            <person name="Weinstock G.M."/>
            <person name="Weissenbach J."/>
            <person name="Williams S.M."/>
            <person name="Woodage T."/>
            <person name="Worley K.C."/>
            <person name="Wu D."/>
            <person name="Yang S."/>
            <person name="Yao Q.A."/>
            <person name="Ye J."/>
            <person name="Yeh R.-F."/>
            <person name="Zaveri J.S."/>
            <person name="Zhan M."/>
            <person name="Zhang G."/>
            <person name="Zhao Q."/>
            <person name="Zheng L."/>
            <person name="Zheng X.H."/>
            <person name="Zhong F.N."/>
            <person name="Zhong W."/>
            <person name="Zhou X."/>
            <person name="Zhu S.C."/>
            <person name="Zhu X."/>
            <person name="Smith H.O."/>
            <person name="Gibbs R.A."/>
            <person name="Myers E.W."/>
            <person name="Rubin G.M."/>
            <person name="Venter J.C."/>
        </authorList>
    </citation>
    <scope>NUCLEOTIDE SEQUENCE [LARGE SCALE GENOMIC DNA]</scope>
    <source>
        <strain>Berkeley</strain>
    </source>
</reference>
<reference key="3">
    <citation type="journal article" date="2002" name="Genome Biol.">
        <title>Annotation of the Drosophila melanogaster euchromatic genome: a systematic review.</title>
        <authorList>
            <person name="Misra S."/>
            <person name="Crosby M.A."/>
            <person name="Mungall C.J."/>
            <person name="Matthews B.B."/>
            <person name="Campbell K.S."/>
            <person name="Hradecky P."/>
            <person name="Huang Y."/>
            <person name="Kaminker J.S."/>
            <person name="Millburn G.H."/>
            <person name="Prochnik S.E."/>
            <person name="Smith C.D."/>
            <person name="Tupy J.L."/>
            <person name="Whitfield E.J."/>
            <person name="Bayraktaroglu L."/>
            <person name="Berman B.P."/>
            <person name="Bettencourt B.R."/>
            <person name="Celniker S.E."/>
            <person name="de Grey A.D.N.J."/>
            <person name="Drysdale R.A."/>
            <person name="Harris N.L."/>
            <person name="Richter J."/>
            <person name="Russo S."/>
            <person name="Schroeder A.J."/>
            <person name="Shu S.Q."/>
            <person name="Stapleton M."/>
            <person name="Yamada C."/>
            <person name="Ashburner M."/>
            <person name="Gelbart W.M."/>
            <person name="Rubin G.M."/>
            <person name="Lewis S.E."/>
        </authorList>
    </citation>
    <scope>GENOME REANNOTATION</scope>
    <source>
        <strain>Berkeley</strain>
    </source>
</reference>
<reference key="4">
    <citation type="journal article" date="2002" name="Genome Biol.">
        <title>A Drosophila full-length cDNA resource.</title>
        <authorList>
            <person name="Stapleton M."/>
            <person name="Carlson J.W."/>
            <person name="Brokstein P."/>
            <person name="Yu C."/>
            <person name="Champe M."/>
            <person name="George R.A."/>
            <person name="Guarin H."/>
            <person name="Kronmiller B."/>
            <person name="Pacleb J.M."/>
            <person name="Park S."/>
            <person name="Wan K.H."/>
            <person name="Rubin G.M."/>
            <person name="Celniker S.E."/>
        </authorList>
    </citation>
    <scope>NUCLEOTIDE SEQUENCE [LARGE SCALE MRNA]</scope>
    <source>
        <strain>Berkeley</strain>
        <tissue>Head</tissue>
    </source>
</reference>
<comment type="function">
    <text evidence="1">May be involved in the metabolism of insect hormones and in the breakdown of synthetic insecticides.</text>
</comment>
<comment type="cofactor">
    <cofactor evidence="1">
        <name>heme</name>
        <dbReference type="ChEBI" id="CHEBI:30413"/>
    </cofactor>
</comment>
<comment type="subcellular location">
    <subcellularLocation>
        <location evidence="2">Endoplasmic reticulum membrane</location>
        <topology evidence="2">Peripheral membrane protein</topology>
    </subcellularLocation>
    <subcellularLocation>
        <location evidence="2">Microsome membrane</location>
        <topology evidence="2">Peripheral membrane protein</topology>
    </subcellularLocation>
</comment>
<comment type="similarity">
    <text evidence="2">Belongs to the cytochrome P450 family.</text>
</comment>
<dbReference type="EC" id="1.14.-.-"/>
<dbReference type="EMBL" id="AE014134">
    <property type="protein sequence ID" value="AAF53365.1"/>
    <property type="molecule type" value="Genomic_DNA"/>
</dbReference>
<dbReference type="EMBL" id="AY051533">
    <property type="protein sequence ID" value="AAK92957.1"/>
    <property type="molecule type" value="mRNA"/>
</dbReference>
<dbReference type="RefSeq" id="NP_609694.1">
    <property type="nucleotide sequence ID" value="NM_135850.3"/>
</dbReference>
<dbReference type="SMR" id="Q9V419"/>
<dbReference type="BioGRID" id="60846">
    <property type="interactions" value="1"/>
</dbReference>
<dbReference type="FunCoup" id="Q9V419">
    <property type="interactions" value="11"/>
</dbReference>
<dbReference type="IntAct" id="Q9V419">
    <property type="interactions" value="5"/>
</dbReference>
<dbReference type="STRING" id="7227.FBpp0080164"/>
<dbReference type="GlyGen" id="Q9V419">
    <property type="glycosylation" value="1 site"/>
</dbReference>
<dbReference type="PaxDb" id="7227-FBpp0080164"/>
<dbReference type="DNASU" id="34817"/>
<dbReference type="EnsemblMetazoa" id="FBtr0080587">
    <property type="protein sequence ID" value="FBpp0080164"/>
    <property type="gene ID" value="FBgn0028940"/>
</dbReference>
<dbReference type="GeneID" id="34817"/>
<dbReference type="KEGG" id="dme:Dmel_CG8864"/>
<dbReference type="UCSC" id="CG8864-RA">
    <property type="organism name" value="d. melanogaster"/>
</dbReference>
<dbReference type="AGR" id="FB:FBgn0028940"/>
<dbReference type="CTD" id="34817"/>
<dbReference type="FlyBase" id="FBgn0028940">
    <property type="gene designation" value="Cyp28a5"/>
</dbReference>
<dbReference type="VEuPathDB" id="VectorBase:FBgn0028940"/>
<dbReference type="eggNOG" id="KOG0158">
    <property type="taxonomic scope" value="Eukaryota"/>
</dbReference>
<dbReference type="GeneTree" id="ENSGT00940000167276"/>
<dbReference type="HOGENOM" id="CLU_001570_5_2_1"/>
<dbReference type="InParanoid" id="Q9V419"/>
<dbReference type="OMA" id="LVWNYDY"/>
<dbReference type="OrthoDB" id="2789670at2759"/>
<dbReference type="PhylomeDB" id="Q9V419"/>
<dbReference type="BioGRID-ORCS" id="34817">
    <property type="hits" value="0 hits in 1 CRISPR screen"/>
</dbReference>
<dbReference type="ChiTaRS" id="Cyp28a5">
    <property type="organism name" value="fly"/>
</dbReference>
<dbReference type="GenomeRNAi" id="34817"/>
<dbReference type="PRO" id="PR:Q9V419"/>
<dbReference type="Proteomes" id="UP000000803">
    <property type="component" value="Chromosome 2L"/>
</dbReference>
<dbReference type="Bgee" id="FBgn0028940">
    <property type="expression patterns" value="Expressed in adult tracheocyte (Drosophila) in open tracheal system trachea and 84 other cell types or tissues"/>
</dbReference>
<dbReference type="GO" id="GO:0005789">
    <property type="term" value="C:endoplasmic reticulum membrane"/>
    <property type="evidence" value="ECO:0007669"/>
    <property type="project" value="UniProtKB-SubCell"/>
</dbReference>
<dbReference type="GO" id="GO:0020037">
    <property type="term" value="F:heme binding"/>
    <property type="evidence" value="ECO:0007669"/>
    <property type="project" value="InterPro"/>
</dbReference>
<dbReference type="GO" id="GO:0005506">
    <property type="term" value="F:iron ion binding"/>
    <property type="evidence" value="ECO:0007669"/>
    <property type="project" value="InterPro"/>
</dbReference>
<dbReference type="GO" id="GO:0004497">
    <property type="term" value="F:monooxygenase activity"/>
    <property type="evidence" value="ECO:0007669"/>
    <property type="project" value="UniProtKB-KW"/>
</dbReference>
<dbReference type="GO" id="GO:0016705">
    <property type="term" value="F:oxidoreductase activity, acting on paired donors, with incorporation or reduction of molecular oxygen"/>
    <property type="evidence" value="ECO:0007669"/>
    <property type="project" value="InterPro"/>
</dbReference>
<dbReference type="CDD" id="cd11056">
    <property type="entry name" value="CYP6-like"/>
    <property type="match status" value="1"/>
</dbReference>
<dbReference type="Gene3D" id="1.10.630.10">
    <property type="entry name" value="Cytochrome P450"/>
    <property type="match status" value="1"/>
</dbReference>
<dbReference type="InterPro" id="IPR001128">
    <property type="entry name" value="Cyt_P450"/>
</dbReference>
<dbReference type="InterPro" id="IPR017972">
    <property type="entry name" value="Cyt_P450_CS"/>
</dbReference>
<dbReference type="InterPro" id="IPR002403">
    <property type="entry name" value="Cyt_P450_E_grp-IV"/>
</dbReference>
<dbReference type="InterPro" id="IPR036396">
    <property type="entry name" value="Cyt_P450_sf"/>
</dbReference>
<dbReference type="InterPro" id="IPR050476">
    <property type="entry name" value="Insect_CytP450_Detox"/>
</dbReference>
<dbReference type="PANTHER" id="PTHR24292">
    <property type="entry name" value="CYTOCHROME P450"/>
    <property type="match status" value="1"/>
</dbReference>
<dbReference type="PANTHER" id="PTHR24292:SF84">
    <property type="entry name" value="CYTOCHROME P450 28A5-RELATED"/>
    <property type="match status" value="1"/>
</dbReference>
<dbReference type="Pfam" id="PF00067">
    <property type="entry name" value="p450"/>
    <property type="match status" value="1"/>
</dbReference>
<dbReference type="PRINTS" id="PR00465">
    <property type="entry name" value="EP450IV"/>
</dbReference>
<dbReference type="PRINTS" id="PR00385">
    <property type="entry name" value="P450"/>
</dbReference>
<dbReference type="SUPFAM" id="SSF48264">
    <property type="entry name" value="Cytochrome P450"/>
    <property type="match status" value="1"/>
</dbReference>
<dbReference type="PROSITE" id="PS00086">
    <property type="entry name" value="CYTOCHROME_P450"/>
    <property type="match status" value="1"/>
</dbReference>
<keyword id="KW-0256">Endoplasmic reticulum</keyword>
<keyword id="KW-0349">Heme</keyword>
<keyword id="KW-0408">Iron</keyword>
<keyword id="KW-0472">Membrane</keyword>
<keyword id="KW-0479">Metal-binding</keyword>
<keyword id="KW-0492">Microsome</keyword>
<keyword id="KW-0503">Monooxygenase</keyword>
<keyword id="KW-0560">Oxidoreductase</keyword>
<keyword id="KW-1185">Reference proteome</keyword>
<feature type="chain" id="PRO_0000051988" description="Probable cytochrome P450 28a5">
    <location>
        <begin position="1"/>
        <end position="505"/>
    </location>
</feature>
<feature type="binding site" description="axial binding residue" evidence="1">
    <location>
        <position position="450"/>
    </location>
    <ligand>
        <name>heme</name>
        <dbReference type="ChEBI" id="CHEBI:30413"/>
    </ligand>
    <ligandPart>
        <name>Fe</name>
        <dbReference type="ChEBI" id="CHEBI:18248"/>
    </ligandPart>
</feature>
<gene>
    <name type="primary">Cyp28a5</name>
    <name type="ORF">CG8864</name>
</gene>
<sequence>MVLITLTLVSLVVGLLYAVLVWNYDYWRKRGVPGPKPKLLCGNYPNMFTMKRHAIYDLDDIYRQYKNKYDAVGIFGSRSPQLLVINPALARRVFVSNFKNFHDNEIAKNIDEKTDFIFANNPFSLTGEKWKTRRADVTPGLTMGRIKTVYPVTNKVCQKLTEWVEKQLRLGSKDGIDAKHMSLCFTTEMVTDCVLGLGAESFSDKPTPIMSKINDLFNQPWTFVLFFILTSSFPSLSHLIKLRFVPVDVERFFVDLMGSAVETRRAQLAAGKQFERSDFLDYILQLGEKRNLDNRQLLAYSMTFLLDGFETTATVLAHILLNLGRNKEAQNLLREEIRSHLQDGTIAFEKLSDLPYLDACVQETIRLFPPGFMSNKLCTESIEIPNKEGPNFVVEKGTTVVVPHYCFMLDEEFFPNPQSFQPERFLEPDAAKTFRERGVFMGFGDGPRVCIGMRFATVQIKAAIVELISKFNVKINDKTRKDNDYEPGQIITGLRGGIWLDLEKL</sequence>
<proteinExistence type="evidence at transcript level"/>